<feature type="chain" id="PRO_0000329300" description="Protein SYS1 homolog">
    <location>
        <begin position="1"/>
        <end position="156"/>
    </location>
</feature>
<feature type="transmembrane region" description="Helical" evidence="2">
    <location>
        <begin position="13"/>
        <end position="33"/>
    </location>
</feature>
<feature type="transmembrane region" description="Helical" evidence="2">
    <location>
        <begin position="65"/>
        <end position="85"/>
    </location>
</feature>
<feature type="transmembrane region" description="Helical" evidence="2">
    <location>
        <begin position="91"/>
        <end position="111"/>
    </location>
</feature>
<feature type="transmembrane region" description="Helical" evidence="2">
    <location>
        <begin position="113"/>
        <end position="133"/>
    </location>
</feature>
<dbReference type="EMBL" id="DP000036">
    <property type="protein sequence ID" value="ABO52918.1"/>
    <property type="molecule type" value="Genomic_DNA"/>
</dbReference>
<dbReference type="RefSeq" id="NP_001162205.1">
    <property type="nucleotide sequence ID" value="NM_001168734.1"/>
</dbReference>
<dbReference type="SMR" id="A4K2N5"/>
<dbReference type="STRING" id="9555.ENSPANP00000017658"/>
<dbReference type="Ensembl" id="ENSPANT00000078008.1">
    <property type="protein sequence ID" value="ENSPANP00000058025.1"/>
    <property type="gene ID" value="ENSPANG00000042818.1"/>
</dbReference>
<dbReference type="GeneID" id="100137166"/>
<dbReference type="KEGG" id="panu:100137166"/>
<dbReference type="CTD" id="90196"/>
<dbReference type="eggNOG" id="KOG4697">
    <property type="taxonomic scope" value="Eukaryota"/>
</dbReference>
<dbReference type="GeneTree" id="ENSGT00940000154347"/>
<dbReference type="HOGENOM" id="CLU_081382_2_1_1"/>
<dbReference type="OMA" id="EYEMVGM"/>
<dbReference type="OrthoDB" id="976at314294"/>
<dbReference type="Proteomes" id="UP000028761">
    <property type="component" value="Chromosome 16"/>
</dbReference>
<dbReference type="Bgee" id="ENSPANG00000024119">
    <property type="expression patterns" value="Expressed in adult mammalian kidney and 66 other cell types or tissues"/>
</dbReference>
<dbReference type="ExpressionAtlas" id="A4K2N5">
    <property type="expression patterns" value="baseline"/>
</dbReference>
<dbReference type="GO" id="GO:0005829">
    <property type="term" value="C:cytosol"/>
    <property type="evidence" value="ECO:0007669"/>
    <property type="project" value="GOC"/>
</dbReference>
<dbReference type="GO" id="GO:0000139">
    <property type="term" value="C:Golgi membrane"/>
    <property type="evidence" value="ECO:0007669"/>
    <property type="project" value="UniProtKB-SubCell"/>
</dbReference>
<dbReference type="GO" id="GO:0005802">
    <property type="term" value="C:trans-Golgi network"/>
    <property type="evidence" value="ECO:0007669"/>
    <property type="project" value="TreeGrafter"/>
</dbReference>
<dbReference type="GO" id="GO:0006895">
    <property type="term" value="P:Golgi to endosome transport"/>
    <property type="evidence" value="ECO:0007669"/>
    <property type="project" value="TreeGrafter"/>
</dbReference>
<dbReference type="GO" id="GO:0043001">
    <property type="term" value="P:Golgi to plasma membrane protein transport"/>
    <property type="evidence" value="ECO:0007669"/>
    <property type="project" value="TreeGrafter"/>
</dbReference>
<dbReference type="GO" id="GO:0034067">
    <property type="term" value="P:protein localization to Golgi apparatus"/>
    <property type="evidence" value="ECO:0007669"/>
    <property type="project" value="TreeGrafter"/>
</dbReference>
<dbReference type="InterPro" id="IPR016973">
    <property type="entry name" value="Integral_membrane_SYS1"/>
</dbReference>
<dbReference type="InterPro" id="IPR019185">
    <property type="entry name" value="Integral_membrane_SYS1-rel"/>
</dbReference>
<dbReference type="PANTHER" id="PTHR12952:SF0">
    <property type="entry name" value="PROTEIN SYS1 HOMOLOG"/>
    <property type="match status" value="1"/>
</dbReference>
<dbReference type="PANTHER" id="PTHR12952">
    <property type="entry name" value="SYS1"/>
    <property type="match status" value="1"/>
</dbReference>
<dbReference type="Pfam" id="PF09801">
    <property type="entry name" value="SYS1"/>
    <property type="match status" value="1"/>
</dbReference>
<dbReference type="PIRSF" id="PIRSF031402">
    <property type="entry name" value="SYS1_homologue"/>
    <property type="match status" value="1"/>
</dbReference>
<keyword id="KW-0333">Golgi apparatus</keyword>
<keyword id="KW-0472">Membrane</keyword>
<keyword id="KW-0653">Protein transport</keyword>
<keyword id="KW-1185">Reference proteome</keyword>
<keyword id="KW-0812">Transmembrane</keyword>
<keyword id="KW-1133">Transmembrane helix</keyword>
<keyword id="KW-0813">Transport</keyword>
<evidence type="ECO:0000250" key="1"/>
<evidence type="ECO:0000255" key="2"/>
<evidence type="ECO:0000305" key="3"/>
<protein>
    <recommendedName>
        <fullName>Protein SYS1 homolog</fullName>
    </recommendedName>
</protein>
<sequence length="156" mass="17615">MAGQFRSYVWDPLLILSQIVLMQTVYYGSLGLWLALVDGLVRSSPSLDQMFDAEILGFSTPPGRLSMMSFILNALTCALGLLYFIRRGKQCLDFTVTVHFFHLLGCWFYSSRFPSALTWWLVQAVCIALMAVIGEYLCMRTELKEIPLNSAPKSNV</sequence>
<reference key="1">
    <citation type="journal article" date="2007" name="Genome Res.">
        <title>Comparative sequence analyses reveal rapid and divergent evolutionary changes of the WFDC locus in the primate lineage.</title>
        <authorList>
            <consortium name="NISC comparative sequencing program"/>
            <person name="Hurle B."/>
            <person name="Swanson W."/>
            <person name="Green E.D."/>
        </authorList>
    </citation>
    <scope>NUCLEOTIDE SEQUENCE [GENOMIC DNA]</scope>
</reference>
<proteinExistence type="inferred from homology"/>
<organism>
    <name type="scientific">Papio anubis</name>
    <name type="common">Olive baboon</name>
    <dbReference type="NCBI Taxonomy" id="9555"/>
    <lineage>
        <taxon>Eukaryota</taxon>
        <taxon>Metazoa</taxon>
        <taxon>Chordata</taxon>
        <taxon>Craniata</taxon>
        <taxon>Vertebrata</taxon>
        <taxon>Euteleostomi</taxon>
        <taxon>Mammalia</taxon>
        <taxon>Eutheria</taxon>
        <taxon>Euarchontoglires</taxon>
        <taxon>Primates</taxon>
        <taxon>Haplorrhini</taxon>
        <taxon>Catarrhini</taxon>
        <taxon>Cercopithecidae</taxon>
        <taxon>Cercopithecinae</taxon>
        <taxon>Papio</taxon>
    </lineage>
</organism>
<gene>
    <name type="primary">SYS1</name>
</gene>
<comment type="function">
    <text evidence="1">Involved in protein trafficking. May serve as a receptor for ARFRP1 (By similarity).</text>
</comment>
<comment type="subunit">
    <text evidence="1">Interacts with ARFRP1.</text>
</comment>
<comment type="subcellular location">
    <subcellularLocation>
        <location evidence="1">Golgi apparatus membrane</location>
        <topology evidence="1">Multi-pass membrane protein</topology>
    </subcellularLocation>
</comment>
<comment type="similarity">
    <text evidence="3">Belongs to the SYS1 family.</text>
</comment>
<name>SYS1_PAPAN</name>
<accession>A4K2N5</accession>